<gene>
    <name type="primary">nma111</name>
    <name type="ORF">AO090103000320</name>
</gene>
<accession>Q2TYB1</accession>
<keyword id="KW-0053">Apoptosis</keyword>
<keyword id="KW-0378">Hydrolase</keyword>
<keyword id="KW-0539">Nucleus</keyword>
<keyword id="KW-0645">Protease</keyword>
<keyword id="KW-1185">Reference proteome</keyword>
<keyword id="KW-0677">Repeat</keyword>
<keyword id="KW-0720">Serine protease</keyword>
<feature type="chain" id="PRO_0000320347" description="Pro-apoptotic serine protease nma111">
    <location>
        <begin position="1"/>
        <end position="1027"/>
    </location>
</feature>
<feature type="domain" description="PDZ 1">
    <location>
        <begin position="288"/>
        <end position="373"/>
    </location>
</feature>
<feature type="domain" description="PDZ 2">
    <location>
        <begin position="875"/>
        <end position="956"/>
    </location>
</feature>
<feature type="region of interest" description="Disordered" evidence="3">
    <location>
        <begin position="1"/>
        <end position="46"/>
    </location>
</feature>
<feature type="region of interest" description="Serine protease">
    <location>
        <begin position="81"/>
        <end position="265"/>
    </location>
</feature>
<feature type="region of interest" description="Disordered" evidence="3">
    <location>
        <begin position="991"/>
        <end position="1027"/>
    </location>
</feature>
<feature type="compositionally biased region" description="Polar residues" evidence="3">
    <location>
        <begin position="31"/>
        <end position="42"/>
    </location>
</feature>
<feature type="active site" description="Charge relay system" evidence="2">
    <location>
        <position position="119"/>
    </location>
</feature>
<feature type="active site" description="Charge relay system" evidence="2">
    <location>
        <position position="150"/>
    </location>
</feature>
<feature type="active site" description="Charge relay system" evidence="2">
    <location>
        <position position="232"/>
    </location>
</feature>
<organism>
    <name type="scientific">Aspergillus oryzae (strain ATCC 42149 / RIB 40)</name>
    <name type="common">Yellow koji mold</name>
    <dbReference type="NCBI Taxonomy" id="510516"/>
    <lineage>
        <taxon>Eukaryota</taxon>
        <taxon>Fungi</taxon>
        <taxon>Dikarya</taxon>
        <taxon>Ascomycota</taxon>
        <taxon>Pezizomycotina</taxon>
        <taxon>Eurotiomycetes</taxon>
        <taxon>Eurotiomycetidae</taxon>
        <taxon>Eurotiales</taxon>
        <taxon>Aspergillaceae</taxon>
        <taxon>Aspergillus</taxon>
        <taxon>Aspergillus subgen. Circumdati</taxon>
    </lineage>
</organism>
<comment type="function">
    <text evidence="1">Nuclear serine protease which mediates apoptosis.</text>
</comment>
<comment type="subcellular location">
    <subcellularLocation>
        <location evidence="1">Nucleus</location>
    </subcellularLocation>
</comment>
<comment type="similarity">
    <text evidence="4">Belongs to the peptidase S1C family.</text>
</comment>
<sequence>MDLNGDAGAKRKRSSIVPAERPAKHLKPESSALTPGDSTPANGTVYDIEDEDDASRLLPIGPAQADSPEWQATIEEVVKSVVSIHFCQTCSFDTELSMSSQATGFVVDAERGYILTNRHVVCPGPFWGYCIFDNHEECDVRPVYRDPVHDFGILKFDPKAIRYMNLTELKLQPDAARVGSEIRVVGNDAGEKLSILSGVISRLDRNAPEYGEGYSDFNTNYIQAAAAASGGSSGSPVVNIDGHAIALQAGGRADGAATDYFLPLDRPLRALECIRRGEPVTRGTIQTQWILKPFDECRRLGLTPEWEATVRKAAPTETSMLVAEIILPEGPADGKLEEGDVLLQVNGELLTQFIRLDDILDSSVGQTVRLLVQRGGQDVEIECQVGDLHAITPDRFVTVAGGTFHDLSYQQSRLYAIATRGVYVCEAAGSFKLENTLSGWLIDSVDKRPTRNLDEFVEVMKTIPDRSRVVISYRHIRDLHTRGTSIVYIDRHWHPKMRLAVRNDETGLWDFSDLADALPALPPVPRKADFIQLDGVSQPAASEIVRSFVRVSCTMPLKLDGYPQAKKTGFGLVVDAEKGLVVVSRAIVPYDLCDINITVADSIIVNAKVVFLHPLQNYTIIQYDPSLVQAPVQSAKLSTEYIKQGQDTIFVGFNQNFRIVVAKTAVTDITTVSIPANASAPRYRAINLDAVTVDTGLSGQCSNGVLIGEDGVVQALWLNYLGERTPSSHKDVEYHLGFATPSLLPVVSKIQQGVMPELRILNMESYVVQMSQARIMGVSEEWIEKVTQANPSRHQLFMVRKVDCPPAGFDNMADTFQEGDILLTLDGQLITRVSELDVMYDKEFLEALIVRNGQEMRIQVPTVPTADLETDRAVVFCGAVLQKPHHAVRQQISKLHSEIYVSARSRGSPSYQYGLSPTNFITAVNGVPTPDLDRFVKEVSKIPDNTYFRLRAVTFDNVPWVVTMKKNDHYFPMSEYLKDPSQPCGWRTVSHNKSKHKDGIAPDAANLNPDAMEQGYDGASDIEPEAE</sequence>
<evidence type="ECO:0000250" key="1"/>
<evidence type="ECO:0000255" key="2"/>
<evidence type="ECO:0000256" key="3">
    <source>
        <dbReference type="SAM" id="MobiDB-lite"/>
    </source>
</evidence>
<evidence type="ECO:0000305" key="4"/>
<name>NM111_ASPOR</name>
<reference key="1">
    <citation type="journal article" date="2005" name="Nature">
        <title>Genome sequencing and analysis of Aspergillus oryzae.</title>
        <authorList>
            <person name="Machida M."/>
            <person name="Asai K."/>
            <person name="Sano M."/>
            <person name="Tanaka T."/>
            <person name="Kumagai T."/>
            <person name="Terai G."/>
            <person name="Kusumoto K."/>
            <person name="Arima T."/>
            <person name="Akita O."/>
            <person name="Kashiwagi Y."/>
            <person name="Abe K."/>
            <person name="Gomi K."/>
            <person name="Horiuchi H."/>
            <person name="Kitamoto K."/>
            <person name="Kobayashi T."/>
            <person name="Takeuchi M."/>
            <person name="Denning D.W."/>
            <person name="Galagan J.E."/>
            <person name="Nierman W.C."/>
            <person name="Yu J."/>
            <person name="Archer D.B."/>
            <person name="Bennett J.W."/>
            <person name="Bhatnagar D."/>
            <person name="Cleveland T.E."/>
            <person name="Fedorova N.D."/>
            <person name="Gotoh O."/>
            <person name="Horikawa H."/>
            <person name="Hosoyama A."/>
            <person name="Ichinomiya M."/>
            <person name="Igarashi R."/>
            <person name="Iwashita K."/>
            <person name="Juvvadi P.R."/>
            <person name="Kato M."/>
            <person name="Kato Y."/>
            <person name="Kin T."/>
            <person name="Kokubun A."/>
            <person name="Maeda H."/>
            <person name="Maeyama N."/>
            <person name="Maruyama J."/>
            <person name="Nagasaki H."/>
            <person name="Nakajima T."/>
            <person name="Oda K."/>
            <person name="Okada K."/>
            <person name="Paulsen I."/>
            <person name="Sakamoto K."/>
            <person name="Sawano T."/>
            <person name="Takahashi M."/>
            <person name="Takase K."/>
            <person name="Terabayashi Y."/>
            <person name="Wortman J.R."/>
            <person name="Yamada O."/>
            <person name="Yamagata Y."/>
            <person name="Anazawa H."/>
            <person name="Hata Y."/>
            <person name="Koide Y."/>
            <person name="Komori T."/>
            <person name="Koyama Y."/>
            <person name="Minetoki T."/>
            <person name="Suharnan S."/>
            <person name="Tanaka A."/>
            <person name="Isono K."/>
            <person name="Kuhara S."/>
            <person name="Ogasawara N."/>
            <person name="Kikuchi H."/>
        </authorList>
    </citation>
    <scope>NUCLEOTIDE SEQUENCE [LARGE SCALE GENOMIC DNA]</scope>
    <source>
        <strain>ATCC 42149 / RIB 40</strain>
    </source>
</reference>
<protein>
    <recommendedName>
        <fullName>Pro-apoptotic serine protease nma111</fullName>
        <ecNumber>3.4.21.-</ecNumber>
    </recommendedName>
</protein>
<proteinExistence type="inferred from homology"/>
<dbReference type="EC" id="3.4.21.-"/>
<dbReference type="EMBL" id="BA000056">
    <property type="protein sequence ID" value="BAE65762.1"/>
    <property type="molecule type" value="Genomic_DNA"/>
</dbReference>
<dbReference type="SMR" id="Q2TYB1"/>
<dbReference type="STRING" id="510516.Q2TYB1"/>
<dbReference type="EnsemblFungi" id="BAE65762">
    <property type="protein sequence ID" value="BAE65762"/>
    <property type="gene ID" value="AO090103000320"/>
</dbReference>
<dbReference type="HOGENOM" id="CLU_003212_0_0_1"/>
<dbReference type="OMA" id="FWGHCVF"/>
<dbReference type="Proteomes" id="UP000006564">
    <property type="component" value="Chromosome 8"/>
</dbReference>
<dbReference type="GO" id="GO:0005634">
    <property type="term" value="C:nucleus"/>
    <property type="evidence" value="ECO:0007669"/>
    <property type="project" value="UniProtKB-SubCell"/>
</dbReference>
<dbReference type="GO" id="GO:0004252">
    <property type="term" value="F:serine-type endopeptidase activity"/>
    <property type="evidence" value="ECO:0007669"/>
    <property type="project" value="InterPro"/>
</dbReference>
<dbReference type="GO" id="GO:0006915">
    <property type="term" value="P:apoptotic process"/>
    <property type="evidence" value="ECO:0007669"/>
    <property type="project" value="UniProtKB-KW"/>
</dbReference>
<dbReference type="GO" id="GO:0006508">
    <property type="term" value="P:proteolysis"/>
    <property type="evidence" value="ECO:0007669"/>
    <property type="project" value="UniProtKB-KW"/>
</dbReference>
<dbReference type="CDD" id="cd06786">
    <property type="entry name" value="cpPDZ1_ScNma111-like"/>
    <property type="match status" value="1"/>
</dbReference>
<dbReference type="CDD" id="cd06719">
    <property type="entry name" value="PDZ2-4_Nma111p-like"/>
    <property type="match status" value="2"/>
</dbReference>
<dbReference type="Gene3D" id="2.30.42.10">
    <property type="match status" value="1"/>
</dbReference>
<dbReference type="Gene3D" id="2.40.10.120">
    <property type="match status" value="2"/>
</dbReference>
<dbReference type="InterPro" id="IPR001478">
    <property type="entry name" value="PDZ"/>
</dbReference>
<dbReference type="InterPro" id="IPR025926">
    <property type="entry name" value="PDZ-like_dom"/>
</dbReference>
<dbReference type="InterPro" id="IPR041489">
    <property type="entry name" value="PDZ_6"/>
</dbReference>
<dbReference type="InterPro" id="IPR036034">
    <property type="entry name" value="PDZ_sf"/>
</dbReference>
<dbReference type="InterPro" id="IPR009003">
    <property type="entry name" value="Peptidase_S1_PA"/>
</dbReference>
<dbReference type="InterPro" id="IPR001940">
    <property type="entry name" value="Peptidase_S1C"/>
</dbReference>
<dbReference type="PANTHER" id="PTHR46366">
    <property type="entry name" value="PRO-APOPTOTIC SERINE PROTEASE NMA111"/>
    <property type="match status" value="1"/>
</dbReference>
<dbReference type="PANTHER" id="PTHR46366:SF8">
    <property type="entry name" value="PRO-APOPTOTIC SERINE PROTEASE NMA111"/>
    <property type="match status" value="1"/>
</dbReference>
<dbReference type="Pfam" id="PF12812">
    <property type="entry name" value="PDZ_1"/>
    <property type="match status" value="2"/>
</dbReference>
<dbReference type="Pfam" id="PF17820">
    <property type="entry name" value="PDZ_6"/>
    <property type="match status" value="1"/>
</dbReference>
<dbReference type="Pfam" id="PF13365">
    <property type="entry name" value="Trypsin_2"/>
    <property type="match status" value="1"/>
</dbReference>
<dbReference type="PRINTS" id="PR00834">
    <property type="entry name" value="PROTEASES2C"/>
</dbReference>
<dbReference type="SMART" id="SM00228">
    <property type="entry name" value="PDZ"/>
    <property type="match status" value="2"/>
</dbReference>
<dbReference type="SUPFAM" id="SSF50156">
    <property type="entry name" value="PDZ domain-like"/>
    <property type="match status" value="3"/>
</dbReference>
<dbReference type="SUPFAM" id="SSF50494">
    <property type="entry name" value="Trypsin-like serine proteases"/>
    <property type="match status" value="2"/>
</dbReference>